<protein>
    <recommendedName>
        <fullName evidence="1">2,3-bisphosphoglycerate-dependent phosphoglycerate mutase</fullName>
        <shortName evidence="1">BPG-dependent PGAM</shortName>
        <shortName evidence="1">PGAM</shortName>
        <shortName evidence="1">Phosphoglyceromutase</shortName>
        <shortName evidence="1">dPGM</shortName>
        <ecNumber evidence="1">5.4.2.11</ecNumber>
    </recommendedName>
</protein>
<name>GPMA_STAEQ</name>
<dbReference type="EC" id="5.4.2.11" evidence="1"/>
<dbReference type="EMBL" id="CP000029">
    <property type="protein sequence ID" value="AAW52808.1"/>
    <property type="molecule type" value="Genomic_DNA"/>
</dbReference>
<dbReference type="RefSeq" id="WP_002438282.1">
    <property type="nucleotide sequence ID" value="NC_002976.3"/>
</dbReference>
<dbReference type="SMR" id="Q5HLI0"/>
<dbReference type="STRING" id="176279.SERP2007"/>
<dbReference type="KEGG" id="ser:SERP2007"/>
<dbReference type="eggNOG" id="COG0588">
    <property type="taxonomic scope" value="Bacteria"/>
</dbReference>
<dbReference type="HOGENOM" id="CLU_033323_1_1_9"/>
<dbReference type="UniPathway" id="UPA00109">
    <property type="reaction ID" value="UER00186"/>
</dbReference>
<dbReference type="Proteomes" id="UP000000531">
    <property type="component" value="Chromosome"/>
</dbReference>
<dbReference type="GO" id="GO:0004619">
    <property type="term" value="F:phosphoglycerate mutase activity"/>
    <property type="evidence" value="ECO:0007669"/>
    <property type="project" value="UniProtKB-EC"/>
</dbReference>
<dbReference type="GO" id="GO:0006094">
    <property type="term" value="P:gluconeogenesis"/>
    <property type="evidence" value="ECO:0007669"/>
    <property type="project" value="UniProtKB-UniRule"/>
</dbReference>
<dbReference type="GO" id="GO:0006096">
    <property type="term" value="P:glycolytic process"/>
    <property type="evidence" value="ECO:0007669"/>
    <property type="project" value="UniProtKB-UniRule"/>
</dbReference>
<dbReference type="CDD" id="cd07067">
    <property type="entry name" value="HP_PGM_like"/>
    <property type="match status" value="1"/>
</dbReference>
<dbReference type="FunFam" id="3.40.50.1240:FF:000003">
    <property type="entry name" value="2,3-bisphosphoglycerate-dependent phosphoglycerate mutase"/>
    <property type="match status" value="1"/>
</dbReference>
<dbReference type="Gene3D" id="3.40.50.1240">
    <property type="entry name" value="Phosphoglycerate mutase-like"/>
    <property type="match status" value="1"/>
</dbReference>
<dbReference type="HAMAP" id="MF_01039">
    <property type="entry name" value="PGAM_GpmA"/>
    <property type="match status" value="1"/>
</dbReference>
<dbReference type="InterPro" id="IPR013078">
    <property type="entry name" value="His_Pase_superF_clade-1"/>
</dbReference>
<dbReference type="InterPro" id="IPR029033">
    <property type="entry name" value="His_PPase_superfam"/>
</dbReference>
<dbReference type="InterPro" id="IPR001345">
    <property type="entry name" value="PG/BPGM_mutase_AS"/>
</dbReference>
<dbReference type="InterPro" id="IPR005952">
    <property type="entry name" value="Phosphogly_mut1"/>
</dbReference>
<dbReference type="NCBIfam" id="TIGR01258">
    <property type="entry name" value="pgm_1"/>
    <property type="match status" value="1"/>
</dbReference>
<dbReference type="NCBIfam" id="NF010713">
    <property type="entry name" value="PRK14115.1"/>
    <property type="match status" value="1"/>
</dbReference>
<dbReference type="NCBIfam" id="NF010717">
    <property type="entry name" value="PRK14119.1"/>
    <property type="match status" value="1"/>
</dbReference>
<dbReference type="PANTHER" id="PTHR11931">
    <property type="entry name" value="PHOSPHOGLYCERATE MUTASE"/>
    <property type="match status" value="1"/>
</dbReference>
<dbReference type="Pfam" id="PF00300">
    <property type="entry name" value="His_Phos_1"/>
    <property type="match status" value="1"/>
</dbReference>
<dbReference type="SMART" id="SM00855">
    <property type="entry name" value="PGAM"/>
    <property type="match status" value="1"/>
</dbReference>
<dbReference type="SUPFAM" id="SSF53254">
    <property type="entry name" value="Phosphoglycerate mutase-like"/>
    <property type="match status" value="1"/>
</dbReference>
<dbReference type="PROSITE" id="PS00175">
    <property type="entry name" value="PG_MUTASE"/>
    <property type="match status" value="1"/>
</dbReference>
<proteinExistence type="inferred from homology"/>
<organism>
    <name type="scientific">Staphylococcus epidermidis (strain ATCC 35984 / DSM 28319 / BCRC 17069 / CCUG 31568 / BM 3577 / RP62A)</name>
    <dbReference type="NCBI Taxonomy" id="176279"/>
    <lineage>
        <taxon>Bacteria</taxon>
        <taxon>Bacillati</taxon>
        <taxon>Bacillota</taxon>
        <taxon>Bacilli</taxon>
        <taxon>Bacillales</taxon>
        <taxon>Staphylococcaceae</taxon>
        <taxon>Staphylococcus</taxon>
    </lineage>
</organism>
<feature type="chain" id="PRO_0000179917" description="2,3-bisphosphoglycerate-dependent phosphoglycerate mutase">
    <location>
        <begin position="1"/>
        <end position="228"/>
    </location>
</feature>
<feature type="active site" description="Tele-phosphohistidine intermediate" evidence="1">
    <location>
        <position position="9"/>
    </location>
</feature>
<feature type="active site" description="Proton donor/acceptor" evidence="1">
    <location>
        <position position="87"/>
    </location>
</feature>
<feature type="binding site" evidence="1">
    <location>
        <begin position="8"/>
        <end position="15"/>
    </location>
    <ligand>
        <name>substrate</name>
    </ligand>
</feature>
<feature type="binding site" evidence="1">
    <location>
        <begin position="21"/>
        <end position="22"/>
    </location>
    <ligand>
        <name>substrate</name>
    </ligand>
</feature>
<feature type="binding site" evidence="1">
    <location>
        <position position="60"/>
    </location>
    <ligand>
        <name>substrate</name>
    </ligand>
</feature>
<feature type="binding site" evidence="1">
    <location>
        <begin position="87"/>
        <end position="90"/>
    </location>
    <ligand>
        <name>substrate</name>
    </ligand>
</feature>
<feature type="binding site" evidence="1">
    <location>
        <position position="98"/>
    </location>
    <ligand>
        <name>substrate</name>
    </ligand>
</feature>
<feature type="binding site" evidence="1">
    <location>
        <begin position="114"/>
        <end position="115"/>
    </location>
    <ligand>
        <name>substrate</name>
    </ligand>
</feature>
<feature type="binding site" evidence="1">
    <location>
        <begin position="183"/>
        <end position="184"/>
    </location>
    <ligand>
        <name>substrate</name>
    </ligand>
</feature>
<feature type="site" description="Transition state stabilizer" evidence="1">
    <location>
        <position position="182"/>
    </location>
</feature>
<comment type="function">
    <text evidence="1">Catalyzes the interconversion of 2-phosphoglycerate and 3-phosphoglycerate.</text>
</comment>
<comment type="catalytic activity">
    <reaction evidence="1">
        <text>(2R)-2-phosphoglycerate = (2R)-3-phosphoglycerate</text>
        <dbReference type="Rhea" id="RHEA:15901"/>
        <dbReference type="ChEBI" id="CHEBI:58272"/>
        <dbReference type="ChEBI" id="CHEBI:58289"/>
        <dbReference type="EC" id="5.4.2.11"/>
    </reaction>
</comment>
<comment type="pathway">
    <text evidence="1">Carbohydrate degradation; glycolysis; pyruvate from D-glyceraldehyde 3-phosphate: step 3/5.</text>
</comment>
<comment type="similarity">
    <text evidence="1">Belongs to the phosphoglycerate mutase family. BPG-dependent PGAM subfamily.</text>
</comment>
<sequence length="228" mass="26697">MPKLILCRHGQSEWNAKNLFTGWADVKLSKQGIEEAQSAGKKIYGNQIEIDIAFTSLLTRALETTQYILAGSDQQWIPVYKSWRLNERHYGGLQGLNKDDARKKWGEDQVHQWRRSYDVRPPRESEEQREAYLKNRRYQHIDHRMMPYCESLKDTLERVVPFWTDHISQHLLDDKTVLVSAHGNSIRALIKYLEGLSEEDIVGYEIKTGAPLVYELTDDLVVKDKYYL</sequence>
<evidence type="ECO:0000255" key="1">
    <source>
        <dbReference type="HAMAP-Rule" id="MF_01039"/>
    </source>
</evidence>
<reference key="1">
    <citation type="journal article" date="2005" name="J. Bacteriol.">
        <title>Insights on evolution of virulence and resistance from the complete genome analysis of an early methicillin-resistant Staphylococcus aureus strain and a biofilm-producing methicillin-resistant Staphylococcus epidermidis strain.</title>
        <authorList>
            <person name="Gill S.R."/>
            <person name="Fouts D.E."/>
            <person name="Archer G.L."/>
            <person name="Mongodin E.F."/>
            <person name="DeBoy R.T."/>
            <person name="Ravel J."/>
            <person name="Paulsen I.T."/>
            <person name="Kolonay J.F."/>
            <person name="Brinkac L.M."/>
            <person name="Beanan M.J."/>
            <person name="Dodson R.J."/>
            <person name="Daugherty S.C."/>
            <person name="Madupu R."/>
            <person name="Angiuoli S.V."/>
            <person name="Durkin A.S."/>
            <person name="Haft D.H."/>
            <person name="Vamathevan J.J."/>
            <person name="Khouri H."/>
            <person name="Utterback T.R."/>
            <person name="Lee C."/>
            <person name="Dimitrov G."/>
            <person name="Jiang L."/>
            <person name="Qin H."/>
            <person name="Weidman J."/>
            <person name="Tran K."/>
            <person name="Kang K.H."/>
            <person name="Hance I.R."/>
            <person name="Nelson K.E."/>
            <person name="Fraser C.M."/>
        </authorList>
    </citation>
    <scope>NUCLEOTIDE SEQUENCE [LARGE SCALE GENOMIC DNA]</scope>
    <source>
        <strain>ATCC 35984 / DSM 28319 / BCRC 17069 / CCUG 31568 / BM 3577 / RP62A</strain>
    </source>
</reference>
<keyword id="KW-0312">Gluconeogenesis</keyword>
<keyword id="KW-0324">Glycolysis</keyword>
<keyword id="KW-0413">Isomerase</keyword>
<keyword id="KW-1185">Reference proteome</keyword>
<gene>
    <name evidence="1" type="primary">gpmA</name>
    <name type="ordered locus">SERP2007</name>
</gene>
<accession>Q5HLI0</accession>